<organism>
    <name type="scientific">Human immunodeficiency virus type 1 group M subtype B (isolate PCV12)</name>
    <name type="common">HIV-1</name>
    <dbReference type="NCBI Taxonomy" id="11679"/>
    <lineage>
        <taxon>Viruses</taxon>
        <taxon>Riboviria</taxon>
        <taxon>Pararnavirae</taxon>
        <taxon>Artverviricota</taxon>
        <taxon>Revtraviricetes</taxon>
        <taxon>Ortervirales</taxon>
        <taxon>Retroviridae</taxon>
        <taxon>Orthoretrovirinae</taxon>
        <taxon>Lentivirus</taxon>
        <taxon>Human immunodeficiency virus type 1</taxon>
    </lineage>
</organism>
<feature type="chain" id="PRO_0000043023" description="Virion infectivity factor" evidence="2">
    <location>
        <begin position="1"/>
        <end position="192"/>
    </location>
</feature>
<feature type="chain" id="PRO_0000043024" description="p17" evidence="2">
    <location>
        <begin position="1"/>
        <end position="150"/>
    </location>
</feature>
<feature type="chain" id="PRO_0000043025" description="p7" evidence="2">
    <location>
        <begin position="151"/>
        <end position="192"/>
    </location>
</feature>
<feature type="region of interest" description="Interaction with host APOBEC3F; F1-box" evidence="2">
    <location>
        <begin position="14"/>
        <end position="17"/>
    </location>
</feature>
<feature type="region of interest" description="Interaction with host APOBEC3G; G-box" evidence="2">
    <location>
        <begin position="40"/>
        <end position="44"/>
    </location>
</feature>
<feature type="region of interest" description="Interaction with host APOBEC3F and APOBEC3G; FG-box" evidence="2">
    <location>
        <begin position="54"/>
        <end position="72"/>
    </location>
</feature>
<feature type="region of interest" description="Interaction with host APOBEC3F; F2-box" evidence="2">
    <location>
        <begin position="74"/>
        <end position="79"/>
    </location>
</feature>
<feature type="region of interest" description="RNA-binding" evidence="2">
    <location>
        <begin position="75"/>
        <end position="114"/>
    </location>
</feature>
<feature type="region of interest" description="SOCS box-like" evidence="2">
    <location>
        <begin position="151"/>
        <end position="180"/>
    </location>
</feature>
<feature type="region of interest" description="Multimerization" evidence="2">
    <location>
        <begin position="151"/>
        <end position="164"/>
    </location>
</feature>
<feature type="region of interest" description="Disordered" evidence="3">
    <location>
        <begin position="164"/>
        <end position="192"/>
    </location>
</feature>
<feature type="region of interest" description="Membrane association" evidence="2">
    <location>
        <begin position="171"/>
        <end position="172"/>
    </location>
</feature>
<feature type="short sequence motif" description="HCCH motif" evidence="2">
    <location>
        <begin position="108"/>
        <end position="139"/>
    </location>
</feature>
<feature type="short sequence motif" description="BC-box-like motif" evidence="2">
    <location>
        <begin position="144"/>
        <end position="153"/>
    </location>
</feature>
<feature type="compositionally biased region" description="Basic residues" evidence="3">
    <location>
        <begin position="176"/>
        <end position="186"/>
    </location>
</feature>
<feature type="binding site" evidence="2">
    <location>
        <position position="108"/>
    </location>
    <ligand>
        <name>Zn(2+)</name>
        <dbReference type="ChEBI" id="CHEBI:29105"/>
    </ligand>
</feature>
<feature type="binding site" evidence="2">
    <location>
        <position position="114"/>
    </location>
    <ligand>
        <name>Zn(2+)</name>
        <dbReference type="ChEBI" id="CHEBI:29105"/>
    </ligand>
</feature>
<feature type="binding site" evidence="2">
    <location>
        <position position="133"/>
    </location>
    <ligand>
        <name>Zn(2+)</name>
        <dbReference type="ChEBI" id="CHEBI:29105"/>
    </ligand>
</feature>
<feature type="binding site" evidence="2">
    <location>
        <position position="139"/>
    </location>
    <ligand>
        <name>Zn(2+)</name>
        <dbReference type="ChEBI" id="CHEBI:29105"/>
    </ligand>
</feature>
<feature type="site" description="Cleavage in virion (by viral protease)" evidence="2">
    <location>
        <begin position="150"/>
        <end position="151"/>
    </location>
</feature>
<feature type="modified residue" description="Phosphothreonine; by host MAP4K1" evidence="2">
    <location>
        <position position="96"/>
    </location>
</feature>
<feature type="modified residue" description="Phosphoserine; by host" evidence="2">
    <location>
        <position position="144"/>
    </location>
</feature>
<feature type="modified residue" description="Phosphothreonine; by host" evidence="2">
    <location>
        <position position="155"/>
    </location>
</feature>
<feature type="modified residue" description="Phosphoserine; by host MAP4K1" evidence="2">
    <location>
        <position position="165"/>
    </location>
</feature>
<feature type="modified residue" description="Phosphothreonine; by host" evidence="2">
    <location>
        <position position="188"/>
    </location>
</feature>
<protein>
    <recommendedName>
        <fullName evidence="2">Virion infectivity factor</fullName>
        <shortName evidence="2">Vif</shortName>
    </recommendedName>
    <alternativeName>
        <fullName evidence="2">SOR protein</fullName>
    </alternativeName>
    <component>
        <recommendedName>
            <fullName evidence="2">p17</fullName>
        </recommendedName>
    </component>
    <component>
        <recommendedName>
            <fullName evidence="2">p7</fullName>
        </recommendedName>
    </component>
</protein>
<evidence type="ECO:0000250" key="1">
    <source>
        <dbReference type="UniProtKB" id="O70897"/>
    </source>
</evidence>
<evidence type="ECO:0000255" key="2">
    <source>
        <dbReference type="HAMAP-Rule" id="MF_04081"/>
    </source>
</evidence>
<evidence type="ECO:0000256" key="3">
    <source>
        <dbReference type="SAM" id="MobiDB-lite"/>
    </source>
</evidence>
<dbReference type="EMBL" id="M11840">
    <property type="protein sequence ID" value="AAA44997.1"/>
    <property type="molecule type" value="Genomic_RNA"/>
</dbReference>
<dbReference type="PIR" id="A04002">
    <property type="entry name" value="ASLJS3"/>
</dbReference>
<dbReference type="RefSeq" id="NP_057851.1">
    <property type="nucleotide sequence ID" value="NC_001802.1"/>
</dbReference>
<dbReference type="SMR" id="P69722"/>
<dbReference type="GeneID" id="155459"/>
<dbReference type="KEGG" id="vg:155459"/>
<dbReference type="GO" id="GO:0030430">
    <property type="term" value="C:host cell cytoplasm"/>
    <property type="evidence" value="ECO:0007669"/>
    <property type="project" value="UniProtKB-SubCell"/>
</dbReference>
<dbReference type="GO" id="GO:0020002">
    <property type="term" value="C:host cell plasma membrane"/>
    <property type="evidence" value="ECO:0007669"/>
    <property type="project" value="UniProtKB-SubCell"/>
</dbReference>
<dbReference type="GO" id="GO:0016020">
    <property type="term" value="C:membrane"/>
    <property type="evidence" value="ECO:0007669"/>
    <property type="project" value="UniProtKB-UniRule"/>
</dbReference>
<dbReference type="GO" id="GO:0044423">
    <property type="term" value="C:virion component"/>
    <property type="evidence" value="ECO:0007669"/>
    <property type="project" value="UniProtKB-UniRule"/>
</dbReference>
<dbReference type="GO" id="GO:0046872">
    <property type="term" value="F:metal ion binding"/>
    <property type="evidence" value="ECO:0007669"/>
    <property type="project" value="UniProtKB-KW"/>
</dbReference>
<dbReference type="GO" id="GO:0003723">
    <property type="term" value="F:RNA binding"/>
    <property type="evidence" value="ECO:0007669"/>
    <property type="project" value="UniProtKB-UniRule"/>
</dbReference>
<dbReference type="GO" id="GO:0019058">
    <property type="term" value="P:viral life cycle"/>
    <property type="evidence" value="ECO:0007669"/>
    <property type="project" value="InterPro"/>
</dbReference>
<dbReference type="HAMAP" id="MF_04081">
    <property type="entry name" value="HIV_VIF"/>
    <property type="match status" value="1"/>
</dbReference>
<dbReference type="InterPro" id="IPR000475">
    <property type="entry name" value="Vif"/>
</dbReference>
<dbReference type="Pfam" id="PF00559">
    <property type="entry name" value="Vif"/>
    <property type="match status" value="1"/>
</dbReference>
<dbReference type="PRINTS" id="PR00349">
    <property type="entry name" value="VIRIONINFFCT"/>
</dbReference>
<sequence>MENRWQVMIVWQVDRMRIRTWKSLVKHHMYVSGKARGWFYRHHYESPHPRISSEVHIPLGDARLVITTYWGLHTGERDWHLGQGVSIEWRKKRYSTQVDPELADQLIHLYYFDCFSDSAIRKALLGHIVSPRCEYQAGHNKVGSLQYLALAALITPKKIKPPLPSVTKLTEDRWNKPQKTKGHRGSHTMNGH</sequence>
<comment type="function">
    <text evidence="2">Counteracts the innate antiviral activity of host APOBEC3F and APOBEC3G by promoting their ubiquitination and degradation. Acts as a substrate recognition component of an E3 ubiquitin-protein ligase complex: mechanistically, Vif hijacks a host cullin-5-RING E3 ubiquitin-protein ligase complex (ECS complex) and the transcription coactivator CBFB/CBF-beta to form an active E3 ubiquitin-protein ligase complex that targets APOBEC3G and APOBEC3F for polyubiquitination, leading to their degradation by the proteasome. Vif interaction with APOBEC3G also blocks its cytidine deaminase activity in a proteasome-independent manner, suggesting a dual inhibitory mechanism. May interact directly with APOBEC3G mRNA in order to inhibit its translation. Association with CBFB/CBF-beta also inhibits the transcription coactivator activity of CBFB/CBF-beta. Seems to play a role in viral morphology by affecting the stability of the viral nucleoprotein core. Finally, Vif also contributes to the G2 cell cycle arrest observed in HIV infected cells.</text>
</comment>
<comment type="subunit">
    <text evidence="1">Homomultimer; in vitro and presumably in vivo. Interacts with viral RNA and Pr55Gag precursor; these interactions mediate Vif incorporation into the virion. Interacts with the viral reverse transcriptase. Forms cullin-5-RING E3 ubiquitin-protein ligase complex (ECS complex) by interacting with host CUL5, RBX2, elongin BC complex (ELOB and ELOC) and CBFB/CBF-beta. Within the ECS complex, Vif interacts directly with host CUL5, ELOC and APOBEC (APOBEC3F and APOBEC3G) substrates. The ECS complex also contains some single-stranded RNA (ssRNA) that acts as a glue that bridges Vif with APOBEC (APOBEC3F and APOBEC3G) substrates. Interacts with host UBCE7IP1 isoform 3/ZIN and possibly with SAT. Interacts with host tyrosine kinases HCK and FYN; these interactions may decrease level of phosphorylated APOBEC3G incorporation into virions. Interacts with host ABCE1; this interaction may play a role in protecting viral RNA from damage during viral assembly. Interacts with host MDM2; this interaction targets Vif for degradation by the proteasome.</text>
</comment>
<comment type="subcellular location">
    <subcellularLocation>
        <location evidence="2">Host cytoplasm</location>
    </subcellularLocation>
    <subcellularLocation>
        <location evidence="2">Host cell membrane</location>
        <topology evidence="2">Peripheral membrane protein</topology>
        <orientation evidence="2">Cytoplasmic side</orientation>
    </subcellularLocation>
    <subcellularLocation>
        <location evidence="2">Virion</location>
    </subcellularLocation>
    <text evidence="2">In the cytoplasm, seems to colocalize with intermediate filament vimentin. A fraction is associated with the cytoplasmic side of cellular membranes, presumably via the interaction with Pr55Gag precursor. Incorporated in virions at a ratio of approximately 7 to 20 molecules per virion.</text>
</comment>
<comment type="induction">
    <text evidence="2">Expressed late during infection in a Rev-dependent manner.</text>
</comment>
<comment type="domain">
    <text evidence="2">The BC-like-box motif mediates the interaction with elongin BC complex.</text>
</comment>
<comment type="domain">
    <text evidence="2">The HCCH motif (H-x(5)-C-x(18)-C-x(5)-H) mediates the interaction with CUL5.</text>
</comment>
<comment type="PTM">
    <text evidence="2">Processed in virion by the viral protease.</text>
</comment>
<comment type="PTM">
    <text evidence="2">Highly phosphorylated on serine and threonine residues.</text>
</comment>
<comment type="PTM">
    <text evidence="2">Polyubiquitinated and degraded by the proteasome in the presence of APOBEC3G.</text>
</comment>
<comment type="miscellaneous">
    <text evidence="2">Vif-defective viruses show catastrophic failure in reverse transcription due to APOBEC-induced mutations that initiate a DNA base repair pathway and compromise the structural integrity of the ssDNA. In the absence of Vif, the virion is morphologically abnormal.</text>
</comment>
<comment type="miscellaneous">
    <text evidence="2">HIV-1 lineages are divided in three main groups, M (for Major), O (for Outlier), and N (for New, or Non-M, Non-O). The vast majority of strains found worldwide belong to the group M. Group O seems to be endemic to and largely confined to Cameroon and neighboring countries in West Central Africa, where these viruses represent a small minority of HIV-1 strains. The group N is represented by a limited number of isolates from Cameroonian persons. The group M is further subdivided in 9 clades or subtypes (A to D, F to H, J and K).</text>
</comment>
<comment type="miscellaneous">
    <text evidence="2">Required for replication in 'nonpermissive' cells, including primary T-cells, macrophages and certain T-cell lines, but is dispensable for replication in 'permissive' cell lines, such as 293T cells. In nonpermissive cells, Vif-defective viruses can produce virions, but they fail to complete reverse transcription and cannot successfully infect new cells.</text>
</comment>
<comment type="similarity">
    <text evidence="2">Belongs to the primate lentivirus group Vif protein family.</text>
</comment>
<organismHost>
    <name type="scientific">Homo sapiens</name>
    <name type="common">Human</name>
    <dbReference type="NCBI Taxonomy" id="9606"/>
</organismHost>
<proteinExistence type="inferred from homology"/>
<accession>P69722</accession>
<accession>P03401</accession>
<gene>
    <name evidence="2" type="primary">vif</name>
</gene>
<reference key="1">
    <citation type="journal article" date="1986" name="Proc. Natl. Acad. Sci. U.S.A.">
        <title>Three novel genes of human T-lymphotropic virus type III: immune reactivity of their products with sera from acquired immune deficiency syndrome patients.</title>
        <authorList>
            <person name="Arya S.K."/>
            <person name="Gallo R.C."/>
        </authorList>
    </citation>
    <scope>NUCLEOTIDE SEQUENCE [GENOMIC RNA]</scope>
</reference>
<reference key="2">
    <citation type="journal article" date="2004" name="Trends Mol. Med.">
        <title>The viral infectivity factor (Vif) of HIV-1 unveiled.</title>
        <authorList>
            <person name="Rose K.M."/>
            <person name="Marin M."/>
            <person name="Kozak S.L."/>
            <person name="Kabat D."/>
        </authorList>
    </citation>
    <scope>REVIEW</scope>
</reference>
<keyword id="KW-0014">AIDS</keyword>
<keyword id="KW-1032">Host cell membrane</keyword>
<keyword id="KW-1035">Host cytoplasm</keyword>
<keyword id="KW-1043">Host membrane</keyword>
<keyword id="KW-0945">Host-virus interaction</keyword>
<keyword id="KW-0472">Membrane</keyword>
<keyword id="KW-0479">Metal-binding</keyword>
<keyword id="KW-0597">Phosphoprotein</keyword>
<keyword id="KW-0694">RNA-binding</keyword>
<keyword id="KW-0832">Ubl conjugation</keyword>
<keyword id="KW-0833">Ubl conjugation pathway</keyword>
<keyword id="KW-0946">Virion</keyword>
<keyword id="KW-0862">Zinc</keyword>
<name>VIF_HV112</name>